<accession>Q1RJL7</accession>
<comment type="function">
    <text evidence="1">Endonuclease that specifically degrades the RNA of RNA-DNA hybrids.</text>
</comment>
<comment type="catalytic activity">
    <reaction evidence="1">
        <text>Endonucleolytic cleavage to 5'-phosphomonoester.</text>
        <dbReference type="EC" id="3.1.26.4"/>
    </reaction>
</comment>
<comment type="cofactor">
    <cofactor evidence="1">
        <name>Mg(2+)</name>
        <dbReference type="ChEBI" id="CHEBI:18420"/>
    </cofactor>
    <text evidence="1">Binds 1 Mg(2+) ion per subunit. May bind a second metal ion at a regulatory site, or after substrate binding.</text>
</comment>
<comment type="subunit">
    <text evidence="1">Monomer.</text>
</comment>
<comment type="subcellular location">
    <subcellularLocation>
        <location evidence="1">Cytoplasm</location>
    </subcellularLocation>
</comment>
<comment type="similarity">
    <text evidence="1">Belongs to the RNase H family.</text>
</comment>
<dbReference type="EC" id="3.1.26.4" evidence="1"/>
<dbReference type="EMBL" id="CP000087">
    <property type="protein sequence ID" value="ABE04447.1"/>
    <property type="molecule type" value="Genomic_DNA"/>
</dbReference>
<dbReference type="RefSeq" id="WP_011477056.1">
    <property type="nucleotide sequence ID" value="NC_007940.1"/>
</dbReference>
<dbReference type="SMR" id="Q1RJL7"/>
<dbReference type="KEGG" id="rbe:RBE_0366"/>
<dbReference type="eggNOG" id="COG0328">
    <property type="taxonomic scope" value="Bacteria"/>
</dbReference>
<dbReference type="HOGENOM" id="CLU_030894_6_0_5"/>
<dbReference type="OrthoDB" id="7845843at2"/>
<dbReference type="Proteomes" id="UP000001951">
    <property type="component" value="Chromosome"/>
</dbReference>
<dbReference type="GO" id="GO:0005737">
    <property type="term" value="C:cytoplasm"/>
    <property type="evidence" value="ECO:0007669"/>
    <property type="project" value="UniProtKB-SubCell"/>
</dbReference>
<dbReference type="GO" id="GO:0000287">
    <property type="term" value="F:magnesium ion binding"/>
    <property type="evidence" value="ECO:0007669"/>
    <property type="project" value="UniProtKB-UniRule"/>
</dbReference>
<dbReference type="GO" id="GO:0003676">
    <property type="term" value="F:nucleic acid binding"/>
    <property type="evidence" value="ECO:0007669"/>
    <property type="project" value="InterPro"/>
</dbReference>
<dbReference type="GO" id="GO:0004523">
    <property type="term" value="F:RNA-DNA hybrid ribonuclease activity"/>
    <property type="evidence" value="ECO:0007669"/>
    <property type="project" value="UniProtKB-UniRule"/>
</dbReference>
<dbReference type="GO" id="GO:0043137">
    <property type="term" value="P:DNA replication, removal of RNA primer"/>
    <property type="evidence" value="ECO:0007669"/>
    <property type="project" value="TreeGrafter"/>
</dbReference>
<dbReference type="CDD" id="cd09278">
    <property type="entry name" value="RNase_HI_prokaryote_like"/>
    <property type="match status" value="1"/>
</dbReference>
<dbReference type="FunFam" id="3.30.420.10:FF:000089">
    <property type="entry name" value="Ribonuclease H"/>
    <property type="match status" value="1"/>
</dbReference>
<dbReference type="Gene3D" id="3.30.420.10">
    <property type="entry name" value="Ribonuclease H-like superfamily/Ribonuclease H"/>
    <property type="match status" value="1"/>
</dbReference>
<dbReference type="HAMAP" id="MF_00042">
    <property type="entry name" value="RNase_H"/>
    <property type="match status" value="1"/>
</dbReference>
<dbReference type="InterPro" id="IPR050092">
    <property type="entry name" value="RNase_H"/>
</dbReference>
<dbReference type="InterPro" id="IPR012337">
    <property type="entry name" value="RNaseH-like_sf"/>
</dbReference>
<dbReference type="InterPro" id="IPR002156">
    <property type="entry name" value="RNaseH_domain"/>
</dbReference>
<dbReference type="InterPro" id="IPR036397">
    <property type="entry name" value="RNaseH_sf"/>
</dbReference>
<dbReference type="InterPro" id="IPR022892">
    <property type="entry name" value="RNaseHI"/>
</dbReference>
<dbReference type="NCBIfam" id="NF001236">
    <property type="entry name" value="PRK00203.1"/>
    <property type="match status" value="1"/>
</dbReference>
<dbReference type="PANTHER" id="PTHR10642">
    <property type="entry name" value="RIBONUCLEASE H1"/>
    <property type="match status" value="1"/>
</dbReference>
<dbReference type="PANTHER" id="PTHR10642:SF26">
    <property type="entry name" value="RIBONUCLEASE H1"/>
    <property type="match status" value="1"/>
</dbReference>
<dbReference type="Pfam" id="PF00075">
    <property type="entry name" value="RNase_H"/>
    <property type="match status" value="1"/>
</dbReference>
<dbReference type="SUPFAM" id="SSF53098">
    <property type="entry name" value="Ribonuclease H-like"/>
    <property type="match status" value="1"/>
</dbReference>
<dbReference type="PROSITE" id="PS50879">
    <property type="entry name" value="RNASE_H_1"/>
    <property type="match status" value="1"/>
</dbReference>
<proteinExistence type="inferred from homology"/>
<keyword id="KW-0963">Cytoplasm</keyword>
<keyword id="KW-0255">Endonuclease</keyword>
<keyword id="KW-0378">Hydrolase</keyword>
<keyword id="KW-0460">Magnesium</keyword>
<keyword id="KW-0479">Metal-binding</keyword>
<keyword id="KW-0540">Nuclease</keyword>
<sequence>MKEDISKVVIYTDGACSGNPGPGGWGALLQFNEVNKEIFGHELETTNNRMEITAALEALKILKKPCHVEIYTDSKYLQQGITVWIHNWIKNNWCKSNNEPVKNADLWQNLYEELSKHTIIWKWVKGHASNSGNIAADKLAVQGRQTAIEILKCRG</sequence>
<protein>
    <recommendedName>
        <fullName evidence="1">Ribonuclease H</fullName>
        <shortName evidence="1">RNase H</shortName>
        <ecNumber evidence="1">3.1.26.4</ecNumber>
    </recommendedName>
</protein>
<name>RNH_RICBR</name>
<feature type="chain" id="PRO_0000278064" description="Ribonuclease H">
    <location>
        <begin position="1"/>
        <end position="155"/>
    </location>
</feature>
<feature type="domain" description="RNase H type-1" evidence="2">
    <location>
        <begin position="4"/>
        <end position="145"/>
    </location>
</feature>
<feature type="binding site" evidence="1">
    <location>
        <position position="13"/>
    </location>
    <ligand>
        <name>Mg(2+)</name>
        <dbReference type="ChEBI" id="CHEBI:18420"/>
        <label>1</label>
    </ligand>
</feature>
<feature type="binding site" evidence="1">
    <location>
        <position position="13"/>
    </location>
    <ligand>
        <name>Mg(2+)</name>
        <dbReference type="ChEBI" id="CHEBI:18420"/>
        <label>2</label>
    </ligand>
</feature>
<feature type="binding site" evidence="1">
    <location>
        <position position="51"/>
    </location>
    <ligand>
        <name>Mg(2+)</name>
        <dbReference type="ChEBI" id="CHEBI:18420"/>
        <label>1</label>
    </ligand>
</feature>
<feature type="binding site" evidence="1">
    <location>
        <position position="73"/>
    </location>
    <ligand>
        <name>Mg(2+)</name>
        <dbReference type="ChEBI" id="CHEBI:18420"/>
        <label>1</label>
    </ligand>
</feature>
<feature type="binding site" evidence="1">
    <location>
        <position position="137"/>
    </location>
    <ligand>
        <name>Mg(2+)</name>
        <dbReference type="ChEBI" id="CHEBI:18420"/>
        <label>2</label>
    </ligand>
</feature>
<gene>
    <name evidence="1" type="primary">rnhA</name>
    <name type="ordered locus">RBE_0366</name>
</gene>
<reference key="1">
    <citation type="journal article" date="2006" name="PLoS Genet.">
        <title>Genome sequence of Rickettsia bellii illuminates the role of amoebae in gene exchanges between intracellular pathogens.</title>
        <authorList>
            <person name="Ogata H."/>
            <person name="La Scola B."/>
            <person name="Audic S."/>
            <person name="Renesto P."/>
            <person name="Blanc G."/>
            <person name="Robert C."/>
            <person name="Fournier P.-E."/>
            <person name="Claverie J.-M."/>
            <person name="Raoult D."/>
        </authorList>
    </citation>
    <scope>NUCLEOTIDE SEQUENCE [LARGE SCALE GENOMIC DNA]</scope>
    <source>
        <strain>RML369-C</strain>
    </source>
</reference>
<organism>
    <name type="scientific">Rickettsia bellii (strain RML369-C)</name>
    <dbReference type="NCBI Taxonomy" id="336407"/>
    <lineage>
        <taxon>Bacteria</taxon>
        <taxon>Pseudomonadati</taxon>
        <taxon>Pseudomonadota</taxon>
        <taxon>Alphaproteobacteria</taxon>
        <taxon>Rickettsiales</taxon>
        <taxon>Rickettsiaceae</taxon>
        <taxon>Rickettsieae</taxon>
        <taxon>Rickettsia</taxon>
        <taxon>belli group</taxon>
    </lineage>
</organism>
<evidence type="ECO:0000255" key="1">
    <source>
        <dbReference type="HAMAP-Rule" id="MF_00042"/>
    </source>
</evidence>
<evidence type="ECO:0000255" key="2">
    <source>
        <dbReference type="PROSITE-ProRule" id="PRU00408"/>
    </source>
</evidence>